<keyword id="KW-0378">Hydrolase</keyword>
<keyword id="KW-0546">Nucleotide metabolism</keyword>
<keyword id="KW-0547">Nucleotide-binding</keyword>
<keyword id="KW-1185">Reference proteome</keyword>
<sequence length="188" mass="21386">MSIKSDKWIRRMAEREGMIEPFEEDQVRYVNERRVISYGTSSYGYDVRCADEFKVFTNIHSAVVDPKGFDEKSFVDVKGDVCVIPPNSFALARTVEYFRIPRSVLTICLGKSTYARCGIIVNVTPLEPEWEGHVTLEFSNTTNLPARIYANEGVAQMLFLESDEVCDVSYKDRGGKYMGQRGVTLPRT</sequence>
<gene>
    <name evidence="1" type="primary">dcd</name>
    <name type="ordered locus">Csal_2114</name>
</gene>
<proteinExistence type="inferred from homology"/>
<comment type="function">
    <text evidence="1">Catalyzes the deamination of dCTP to dUTP.</text>
</comment>
<comment type="catalytic activity">
    <reaction evidence="1">
        <text>dCTP + H2O + H(+) = dUTP + NH4(+)</text>
        <dbReference type="Rhea" id="RHEA:22680"/>
        <dbReference type="ChEBI" id="CHEBI:15377"/>
        <dbReference type="ChEBI" id="CHEBI:15378"/>
        <dbReference type="ChEBI" id="CHEBI:28938"/>
        <dbReference type="ChEBI" id="CHEBI:61481"/>
        <dbReference type="ChEBI" id="CHEBI:61555"/>
        <dbReference type="EC" id="3.5.4.13"/>
    </reaction>
</comment>
<comment type="pathway">
    <text evidence="1">Pyrimidine metabolism; dUMP biosynthesis; dUMP from dCTP (dUTP route): step 1/2.</text>
</comment>
<comment type="subunit">
    <text evidence="1">Homotrimer.</text>
</comment>
<comment type="similarity">
    <text evidence="1">Belongs to the dCTP deaminase family.</text>
</comment>
<dbReference type="EC" id="3.5.4.13" evidence="1"/>
<dbReference type="EMBL" id="CP000285">
    <property type="protein sequence ID" value="ABE59465.1"/>
    <property type="molecule type" value="Genomic_DNA"/>
</dbReference>
<dbReference type="RefSeq" id="WP_011507411.1">
    <property type="nucleotide sequence ID" value="NC_007963.1"/>
</dbReference>
<dbReference type="SMR" id="Q1QVP3"/>
<dbReference type="STRING" id="290398.Csal_2114"/>
<dbReference type="GeneID" id="95334831"/>
<dbReference type="KEGG" id="csa:Csal_2114"/>
<dbReference type="eggNOG" id="COG0717">
    <property type="taxonomic scope" value="Bacteria"/>
</dbReference>
<dbReference type="HOGENOM" id="CLU_087476_4_0_6"/>
<dbReference type="OrthoDB" id="9780956at2"/>
<dbReference type="UniPathway" id="UPA00610">
    <property type="reaction ID" value="UER00665"/>
</dbReference>
<dbReference type="Proteomes" id="UP000000239">
    <property type="component" value="Chromosome"/>
</dbReference>
<dbReference type="GO" id="GO:0008829">
    <property type="term" value="F:dCTP deaminase activity"/>
    <property type="evidence" value="ECO:0007669"/>
    <property type="project" value="UniProtKB-UniRule"/>
</dbReference>
<dbReference type="GO" id="GO:0000166">
    <property type="term" value="F:nucleotide binding"/>
    <property type="evidence" value="ECO:0007669"/>
    <property type="project" value="UniProtKB-KW"/>
</dbReference>
<dbReference type="GO" id="GO:0006226">
    <property type="term" value="P:dUMP biosynthetic process"/>
    <property type="evidence" value="ECO:0007669"/>
    <property type="project" value="UniProtKB-UniPathway"/>
</dbReference>
<dbReference type="GO" id="GO:0006229">
    <property type="term" value="P:dUTP biosynthetic process"/>
    <property type="evidence" value="ECO:0007669"/>
    <property type="project" value="UniProtKB-UniRule"/>
</dbReference>
<dbReference type="GO" id="GO:0015949">
    <property type="term" value="P:nucleobase-containing small molecule interconversion"/>
    <property type="evidence" value="ECO:0007669"/>
    <property type="project" value="TreeGrafter"/>
</dbReference>
<dbReference type="CDD" id="cd07557">
    <property type="entry name" value="trimeric_dUTPase"/>
    <property type="match status" value="1"/>
</dbReference>
<dbReference type="FunFam" id="2.70.40.10:FF:000001">
    <property type="entry name" value="dCTP deaminase"/>
    <property type="match status" value="1"/>
</dbReference>
<dbReference type="Gene3D" id="2.70.40.10">
    <property type="match status" value="1"/>
</dbReference>
<dbReference type="HAMAP" id="MF_00146">
    <property type="entry name" value="dCTP_deaminase"/>
    <property type="match status" value="1"/>
</dbReference>
<dbReference type="InterPro" id="IPR011962">
    <property type="entry name" value="dCTP_deaminase"/>
</dbReference>
<dbReference type="InterPro" id="IPR036157">
    <property type="entry name" value="dUTPase-like_sf"/>
</dbReference>
<dbReference type="InterPro" id="IPR033704">
    <property type="entry name" value="dUTPase_trimeric"/>
</dbReference>
<dbReference type="NCBIfam" id="TIGR02274">
    <property type="entry name" value="dCTP_deam"/>
    <property type="match status" value="1"/>
</dbReference>
<dbReference type="PANTHER" id="PTHR42680">
    <property type="entry name" value="DCTP DEAMINASE"/>
    <property type="match status" value="1"/>
</dbReference>
<dbReference type="PANTHER" id="PTHR42680:SF3">
    <property type="entry name" value="DCTP DEAMINASE"/>
    <property type="match status" value="1"/>
</dbReference>
<dbReference type="Pfam" id="PF22769">
    <property type="entry name" value="DCD"/>
    <property type="match status" value="1"/>
</dbReference>
<dbReference type="SUPFAM" id="SSF51283">
    <property type="entry name" value="dUTPase-like"/>
    <property type="match status" value="1"/>
</dbReference>
<organism>
    <name type="scientific">Chromohalobacter salexigens (strain ATCC BAA-138 / DSM 3043 / CIP 106854 / NCIMB 13768 / 1H11)</name>
    <dbReference type="NCBI Taxonomy" id="290398"/>
    <lineage>
        <taxon>Bacteria</taxon>
        <taxon>Pseudomonadati</taxon>
        <taxon>Pseudomonadota</taxon>
        <taxon>Gammaproteobacteria</taxon>
        <taxon>Oceanospirillales</taxon>
        <taxon>Halomonadaceae</taxon>
        <taxon>Chromohalobacter</taxon>
    </lineage>
</organism>
<reference key="1">
    <citation type="journal article" date="2011" name="Stand. Genomic Sci.">
        <title>Complete genome sequence of the halophilic and highly halotolerant Chromohalobacter salexigens type strain (1H11(T)).</title>
        <authorList>
            <person name="Copeland A."/>
            <person name="O'Connor K."/>
            <person name="Lucas S."/>
            <person name="Lapidus A."/>
            <person name="Berry K.W."/>
            <person name="Detter J.C."/>
            <person name="Del Rio T.G."/>
            <person name="Hammon N."/>
            <person name="Dalin E."/>
            <person name="Tice H."/>
            <person name="Pitluck S."/>
            <person name="Bruce D."/>
            <person name="Goodwin L."/>
            <person name="Han C."/>
            <person name="Tapia R."/>
            <person name="Saunders E."/>
            <person name="Schmutz J."/>
            <person name="Brettin T."/>
            <person name="Larimer F."/>
            <person name="Land M."/>
            <person name="Hauser L."/>
            <person name="Vargas C."/>
            <person name="Nieto J.J."/>
            <person name="Kyrpides N.C."/>
            <person name="Ivanova N."/>
            <person name="Goker M."/>
            <person name="Klenk H.P."/>
            <person name="Csonka L.N."/>
            <person name="Woyke T."/>
        </authorList>
    </citation>
    <scope>NUCLEOTIDE SEQUENCE [LARGE SCALE GENOMIC DNA]</scope>
    <source>
        <strain>ATCC BAA-138 / DSM 3043 / CIP 106854 / NCIMB 13768 / 1H11</strain>
    </source>
</reference>
<feature type="chain" id="PRO_1000009706" description="dCTP deaminase">
    <location>
        <begin position="1"/>
        <end position="188"/>
    </location>
</feature>
<feature type="active site" description="Proton donor/acceptor" evidence="1">
    <location>
        <position position="137"/>
    </location>
</feature>
<feature type="binding site" evidence="1">
    <location>
        <begin position="111"/>
        <end position="116"/>
    </location>
    <ligand>
        <name>dCTP</name>
        <dbReference type="ChEBI" id="CHEBI:61481"/>
    </ligand>
</feature>
<feature type="binding site" evidence="1">
    <location>
        <begin position="135"/>
        <end position="137"/>
    </location>
    <ligand>
        <name>dCTP</name>
        <dbReference type="ChEBI" id="CHEBI:61481"/>
    </ligand>
</feature>
<feature type="binding site" evidence="1">
    <location>
        <position position="156"/>
    </location>
    <ligand>
        <name>dCTP</name>
        <dbReference type="ChEBI" id="CHEBI:61481"/>
    </ligand>
</feature>
<feature type="binding site" evidence="1">
    <location>
        <position position="170"/>
    </location>
    <ligand>
        <name>dCTP</name>
        <dbReference type="ChEBI" id="CHEBI:61481"/>
    </ligand>
</feature>
<feature type="binding site" evidence="1">
    <location>
        <position position="180"/>
    </location>
    <ligand>
        <name>dCTP</name>
        <dbReference type="ChEBI" id="CHEBI:61481"/>
    </ligand>
</feature>
<name>DCD_CHRSD</name>
<protein>
    <recommendedName>
        <fullName evidence="1">dCTP deaminase</fullName>
        <ecNumber evidence="1">3.5.4.13</ecNumber>
    </recommendedName>
    <alternativeName>
        <fullName evidence="1">Deoxycytidine triphosphate deaminase</fullName>
    </alternativeName>
</protein>
<evidence type="ECO:0000255" key="1">
    <source>
        <dbReference type="HAMAP-Rule" id="MF_00146"/>
    </source>
</evidence>
<accession>Q1QVP3</accession>